<accession>A8FYZ1</accession>
<evidence type="ECO:0000255" key="1">
    <source>
        <dbReference type="HAMAP-Rule" id="MF_00087"/>
    </source>
</evidence>
<evidence type="ECO:0000305" key="2"/>
<dbReference type="EC" id="1.2.1.70" evidence="1"/>
<dbReference type="EMBL" id="CP000821">
    <property type="protein sequence ID" value="ABV38064.1"/>
    <property type="status" value="ALT_INIT"/>
    <property type="molecule type" value="Genomic_DNA"/>
</dbReference>
<dbReference type="RefSeq" id="WP_041421787.1">
    <property type="nucleotide sequence ID" value="NC_009831.1"/>
</dbReference>
<dbReference type="SMR" id="A8FYZ1"/>
<dbReference type="STRING" id="425104.Ssed_3460"/>
<dbReference type="KEGG" id="sse:Ssed_3460"/>
<dbReference type="eggNOG" id="COG0373">
    <property type="taxonomic scope" value="Bacteria"/>
</dbReference>
<dbReference type="HOGENOM" id="CLU_035113_2_2_6"/>
<dbReference type="OrthoDB" id="110209at2"/>
<dbReference type="UniPathway" id="UPA00251">
    <property type="reaction ID" value="UER00316"/>
</dbReference>
<dbReference type="Proteomes" id="UP000002015">
    <property type="component" value="Chromosome"/>
</dbReference>
<dbReference type="GO" id="GO:0008883">
    <property type="term" value="F:glutamyl-tRNA reductase activity"/>
    <property type="evidence" value="ECO:0007669"/>
    <property type="project" value="UniProtKB-UniRule"/>
</dbReference>
<dbReference type="GO" id="GO:0050661">
    <property type="term" value="F:NADP binding"/>
    <property type="evidence" value="ECO:0007669"/>
    <property type="project" value="InterPro"/>
</dbReference>
<dbReference type="GO" id="GO:0019353">
    <property type="term" value="P:protoporphyrinogen IX biosynthetic process from glutamate"/>
    <property type="evidence" value="ECO:0007669"/>
    <property type="project" value="TreeGrafter"/>
</dbReference>
<dbReference type="CDD" id="cd05213">
    <property type="entry name" value="NAD_bind_Glutamyl_tRNA_reduct"/>
    <property type="match status" value="1"/>
</dbReference>
<dbReference type="FunFam" id="3.30.460.30:FF:000001">
    <property type="entry name" value="Glutamyl-tRNA reductase"/>
    <property type="match status" value="1"/>
</dbReference>
<dbReference type="FunFam" id="3.40.50.720:FF:000031">
    <property type="entry name" value="Glutamyl-tRNA reductase"/>
    <property type="match status" value="1"/>
</dbReference>
<dbReference type="Gene3D" id="3.30.460.30">
    <property type="entry name" value="Glutamyl-tRNA reductase, N-terminal domain"/>
    <property type="match status" value="1"/>
</dbReference>
<dbReference type="Gene3D" id="3.40.50.720">
    <property type="entry name" value="NAD(P)-binding Rossmann-like Domain"/>
    <property type="match status" value="1"/>
</dbReference>
<dbReference type="HAMAP" id="MF_00087">
    <property type="entry name" value="Glu_tRNA_reductase"/>
    <property type="match status" value="1"/>
</dbReference>
<dbReference type="InterPro" id="IPR000343">
    <property type="entry name" value="4pyrrol_synth_GluRdtase"/>
</dbReference>
<dbReference type="InterPro" id="IPR015896">
    <property type="entry name" value="4pyrrol_synth_GluRdtase_dimer"/>
</dbReference>
<dbReference type="InterPro" id="IPR015895">
    <property type="entry name" value="4pyrrol_synth_GluRdtase_N"/>
</dbReference>
<dbReference type="InterPro" id="IPR018214">
    <property type="entry name" value="GluRdtase_CS"/>
</dbReference>
<dbReference type="InterPro" id="IPR036453">
    <property type="entry name" value="GluRdtase_dimer_dom_sf"/>
</dbReference>
<dbReference type="InterPro" id="IPR036343">
    <property type="entry name" value="GluRdtase_N_sf"/>
</dbReference>
<dbReference type="InterPro" id="IPR036291">
    <property type="entry name" value="NAD(P)-bd_dom_sf"/>
</dbReference>
<dbReference type="InterPro" id="IPR006151">
    <property type="entry name" value="Shikm_DH/Glu-tRNA_Rdtase"/>
</dbReference>
<dbReference type="NCBIfam" id="TIGR01035">
    <property type="entry name" value="hemA"/>
    <property type="match status" value="1"/>
</dbReference>
<dbReference type="PANTHER" id="PTHR43013">
    <property type="entry name" value="GLUTAMYL-TRNA REDUCTASE"/>
    <property type="match status" value="1"/>
</dbReference>
<dbReference type="PANTHER" id="PTHR43013:SF1">
    <property type="entry name" value="GLUTAMYL-TRNA REDUCTASE"/>
    <property type="match status" value="1"/>
</dbReference>
<dbReference type="Pfam" id="PF00745">
    <property type="entry name" value="GlutR_dimer"/>
    <property type="match status" value="1"/>
</dbReference>
<dbReference type="Pfam" id="PF05201">
    <property type="entry name" value="GlutR_N"/>
    <property type="match status" value="1"/>
</dbReference>
<dbReference type="Pfam" id="PF01488">
    <property type="entry name" value="Shikimate_DH"/>
    <property type="match status" value="1"/>
</dbReference>
<dbReference type="PIRSF" id="PIRSF000445">
    <property type="entry name" value="4pyrrol_synth_GluRdtase"/>
    <property type="match status" value="1"/>
</dbReference>
<dbReference type="SUPFAM" id="SSF69742">
    <property type="entry name" value="Glutamyl tRNA-reductase catalytic, N-terminal domain"/>
    <property type="match status" value="1"/>
</dbReference>
<dbReference type="SUPFAM" id="SSF69075">
    <property type="entry name" value="Glutamyl tRNA-reductase dimerization domain"/>
    <property type="match status" value="1"/>
</dbReference>
<dbReference type="SUPFAM" id="SSF51735">
    <property type="entry name" value="NAD(P)-binding Rossmann-fold domains"/>
    <property type="match status" value="1"/>
</dbReference>
<dbReference type="PROSITE" id="PS00747">
    <property type="entry name" value="GLUTR"/>
    <property type="match status" value="1"/>
</dbReference>
<name>HEM1_SHESH</name>
<gene>
    <name evidence="1" type="primary">hemA</name>
    <name type="ordered locus">Ssed_3460</name>
</gene>
<organism>
    <name type="scientific">Shewanella sediminis (strain HAW-EB3)</name>
    <dbReference type="NCBI Taxonomy" id="425104"/>
    <lineage>
        <taxon>Bacteria</taxon>
        <taxon>Pseudomonadati</taxon>
        <taxon>Pseudomonadota</taxon>
        <taxon>Gammaproteobacteria</taxon>
        <taxon>Alteromonadales</taxon>
        <taxon>Shewanellaceae</taxon>
        <taxon>Shewanella</taxon>
    </lineage>
</organism>
<feature type="chain" id="PRO_0000335071" description="Glutamyl-tRNA reductase">
    <location>
        <begin position="1"/>
        <end position="416"/>
    </location>
</feature>
<feature type="active site" description="Nucleophile" evidence="1">
    <location>
        <position position="50"/>
    </location>
</feature>
<feature type="binding site" evidence="1">
    <location>
        <begin position="49"/>
        <end position="52"/>
    </location>
    <ligand>
        <name>substrate</name>
    </ligand>
</feature>
<feature type="binding site" evidence="1">
    <location>
        <position position="105"/>
    </location>
    <ligand>
        <name>substrate</name>
    </ligand>
</feature>
<feature type="binding site" evidence="1">
    <location>
        <begin position="110"/>
        <end position="112"/>
    </location>
    <ligand>
        <name>substrate</name>
    </ligand>
</feature>
<feature type="binding site" evidence="1">
    <location>
        <position position="116"/>
    </location>
    <ligand>
        <name>substrate</name>
    </ligand>
</feature>
<feature type="binding site" evidence="1">
    <location>
        <begin position="185"/>
        <end position="190"/>
    </location>
    <ligand>
        <name>NADP(+)</name>
        <dbReference type="ChEBI" id="CHEBI:58349"/>
    </ligand>
</feature>
<feature type="site" description="Important for activity" evidence="1">
    <location>
        <position position="95"/>
    </location>
</feature>
<proteinExistence type="inferred from homology"/>
<comment type="function">
    <text evidence="1">Catalyzes the NADPH-dependent reduction of glutamyl-tRNA(Glu) to glutamate 1-semialdehyde (GSA).</text>
</comment>
<comment type="catalytic activity">
    <reaction evidence="1">
        <text>(S)-4-amino-5-oxopentanoate + tRNA(Glu) + NADP(+) = L-glutamyl-tRNA(Glu) + NADPH + H(+)</text>
        <dbReference type="Rhea" id="RHEA:12344"/>
        <dbReference type="Rhea" id="RHEA-COMP:9663"/>
        <dbReference type="Rhea" id="RHEA-COMP:9680"/>
        <dbReference type="ChEBI" id="CHEBI:15378"/>
        <dbReference type="ChEBI" id="CHEBI:57501"/>
        <dbReference type="ChEBI" id="CHEBI:57783"/>
        <dbReference type="ChEBI" id="CHEBI:58349"/>
        <dbReference type="ChEBI" id="CHEBI:78442"/>
        <dbReference type="ChEBI" id="CHEBI:78520"/>
        <dbReference type="EC" id="1.2.1.70"/>
    </reaction>
</comment>
<comment type="pathway">
    <text evidence="1">Porphyrin-containing compound metabolism; protoporphyrin-IX biosynthesis; 5-aminolevulinate from L-glutamyl-tRNA(Glu): step 1/2.</text>
</comment>
<comment type="subunit">
    <text evidence="1">Homodimer.</text>
</comment>
<comment type="domain">
    <text evidence="1">Possesses an unusual extended V-shaped dimeric structure with each monomer consisting of three distinct domains arranged along a curved 'spinal' alpha-helix. The N-terminal catalytic domain specifically recognizes the glutamate moiety of the substrate. The second domain is the NADPH-binding domain, and the third C-terminal domain is responsible for dimerization.</text>
</comment>
<comment type="miscellaneous">
    <text evidence="1">During catalysis, the active site Cys acts as a nucleophile attacking the alpha-carbonyl group of tRNA-bound glutamate with the formation of a thioester intermediate between enzyme and glutamate, and the concomitant release of tRNA(Glu). The thioester intermediate is finally reduced by direct hydride transfer from NADPH, to form the product GSA.</text>
</comment>
<comment type="similarity">
    <text evidence="1">Belongs to the glutamyl-tRNA reductase family.</text>
</comment>
<comment type="sequence caution" evidence="2">
    <conflict type="erroneous initiation">
        <sequence resource="EMBL-CDS" id="ABV38064"/>
    </conflict>
</comment>
<reference key="1">
    <citation type="submission" date="2007-08" db="EMBL/GenBank/DDBJ databases">
        <title>Complete sequence of Shewanella sediminis HAW-EB3.</title>
        <authorList>
            <consortium name="US DOE Joint Genome Institute"/>
            <person name="Copeland A."/>
            <person name="Lucas S."/>
            <person name="Lapidus A."/>
            <person name="Barry K."/>
            <person name="Glavina del Rio T."/>
            <person name="Dalin E."/>
            <person name="Tice H."/>
            <person name="Pitluck S."/>
            <person name="Chertkov O."/>
            <person name="Brettin T."/>
            <person name="Bruce D."/>
            <person name="Detter J.C."/>
            <person name="Han C."/>
            <person name="Schmutz J."/>
            <person name="Larimer F."/>
            <person name="Land M."/>
            <person name="Hauser L."/>
            <person name="Kyrpides N."/>
            <person name="Kim E."/>
            <person name="Zhao J.-S."/>
            <person name="Richardson P."/>
        </authorList>
    </citation>
    <scope>NUCLEOTIDE SEQUENCE [LARGE SCALE GENOMIC DNA]</scope>
    <source>
        <strain>HAW-EB3</strain>
    </source>
</reference>
<sequence length="416" mass="45581">MSLVAIGINHKTATVDLREKVAFSPDKIHDAMKSLASRTKTGEAVIISTCNRTELYTNTGDEAEVIRWLEEYHQLSHEDVEPCLYKFEGQAVAQHLMRVSSGLDSLILGEPQILGQVKQSFVKAKEAGSVAITMDRLFQNTFSVAKKIRTETEIGAAAVSVAFAAVSMAKHIFSSLSTTKVLLVGAGETIELVARHLKDNGVDSMVVANRTLSRAEGMCEEFGATAITLEQIPDYLPQADIVISSTASPLPILGKGMVEKALKQRRHQPMLLVDIAVPRDIEAEVAELDDAFLYTVDDLQSIIEQNMASRREAAEQAEVIAEEQSHLFMEWVRSLESVDSIREYRTASMAIKDELVERAINKLAQGGDSEKLLLELANKLTNKLIHAPTQALTVASRQGDLNSIGQLRTALGLDKN</sequence>
<keyword id="KW-0521">NADP</keyword>
<keyword id="KW-0560">Oxidoreductase</keyword>
<keyword id="KW-0627">Porphyrin biosynthesis</keyword>
<keyword id="KW-1185">Reference proteome</keyword>
<protein>
    <recommendedName>
        <fullName evidence="1">Glutamyl-tRNA reductase</fullName>
        <shortName evidence="1">GluTR</shortName>
        <ecNumber evidence="1">1.2.1.70</ecNumber>
    </recommendedName>
</protein>